<name>NUD22_BOVIN</name>
<protein>
    <recommendedName>
        <fullName>Uridine diphosphate glucose pyrophosphatase NUDT22</fullName>
        <shortName>UDPG pyrophosphatase</shortName>
        <shortName>UGPPase</shortName>
        <ecNumber>3.6.1.45</ecNumber>
    </recommendedName>
    <alternativeName>
        <fullName>Nucleoside diphosphate-linked moiety X motif 22</fullName>
        <shortName>Nudix motif 22</shortName>
    </alternativeName>
</protein>
<evidence type="ECO:0000250" key="1">
    <source>
        <dbReference type="UniProtKB" id="Q9BRQ3"/>
    </source>
</evidence>
<evidence type="ECO:0000255" key="2">
    <source>
        <dbReference type="PROSITE-ProRule" id="PRU00794"/>
    </source>
</evidence>
<evidence type="ECO:0000305" key="3"/>
<dbReference type="EC" id="3.6.1.45"/>
<dbReference type="EMBL" id="BC110129">
    <property type="protein sequence ID" value="AAI10130.1"/>
    <property type="molecule type" value="mRNA"/>
</dbReference>
<dbReference type="RefSeq" id="NP_001033769.1">
    <property type="nucleotide sequence ID" value="NM_001038680.1"/>
</dbReference>
<dbReference type="RefSeq" id="XP_005227175.2">
    <property type="nucleotide sequence ID" value="XM_005227118.5"/>
</dbReference>
<dbReference type="RefSeq" id="XP_005227176.4">
    <property type="nucleotide sequence ID" value="XM_005227119.5"/>
</dbReference>
<dbReference type="SMR" id="Q2TBI8"/>
<dbReference type="FunCoup" id="Q2TBI8">
    <property type="interactions" value="165"/>
</dbReference>
<dbReference type="STRING" id="9913.ENSBTAP00000067982"/>
<dbReference type="PaxDb" id="9913-ENSBTAP00000043364"/>
<dbReference type="Ensembl" id="ENSBTAT00000090032.1">
    <property type="protein sequence ID" value="ENSBTAP00000093526.1"/>
    <property type="gene ID" value="ENSBTAG00000016559.7"/>
</dbReference>
<dbReference type="GeneID" id="533578"/>
<dbReference type="KEGG" id="bta:533578"/>
<dbReference type="CTD" id="84304"/>
<dbReference type="VGNC" id="VGNC:32337">
    <property type="gene designation" value="NUDT22"/>
</dbReference>
<dbReference type="eggNOG" id="ENOG502QRSW">
    <property type="taxonomic scope" value="Eukaryota"/>
</dbReference>
<dbReference type="GeneTree" id="ENSGT00390000017869"/>
<dbReference type="HOGENOM" id="CLU_061819_1_0_1"/>
<dbReference type="InParanoid" id="Q2TBI8"/>
<dbReference type="OrthoDB" id="242473at2759"/>
<dbReference type="TreeFam" id="TF106357"/>
<dbReference type="Proteomes" id="UP000009136">
    <property type="component" value="Chromosome 29"/>
</dbReference>
<dbReference type="GO" id="GO:0052751">
    <property type="term" value="F:GDP-mannose hydrolase activity"/>
    <property type="evidence" value="ECO:0000318"/>
    <property type="project" value="GO_Central"/>
</dbReference>
<dbReference type="GO" id="GO:0046872">
    <property type="term" value="F:metal ion binding"/>
    <property type="evidence" value="ECO:0000250"/>
    <property type="project" value="UniProtKB"/>
</dbReference>
<dbReference type="GO" id="GO:0008768">
    <property type="term" value="F:UDP-sugar diphosphatase activity"/>
    <property type="evidence" value="ECO:0000250"/>
    <property type="project" value="UniProtKB"/>
</dbReference>
<dbReference type="InterPro" id="IPR000086">
    <property type="entry name" value="NUDIX_hydrolase_dom"/>
</dbReference>
<dbReference type="InterPro" id="IPR055295">
    <property type="entry name" value="NUDT22/NUDT9-like"/>
</dbReference>
<dbReference type="PANTHER" id="PTHR31835">
    <property type="entry name" value="URIDINE DIPHOSPHATE GLUCOSE PYROPHOSPHATASE"/>
    <property type="match status" value="1"/>
</dbReference>
<dbReference type="PANTHER" id="PTHR31835:SF1">
    <property type="entry name" value="URIDINE DIPHOSPHATE GLUCOSE PYROPHOSPHATASE NUDT22"/>
    <property type="match status" value="1"/>
</dbReference>
<dbReference type="PROSITE" id="PS51462">
    <property type="entry name" value="NUDIX"/>
    <property type="match status" value="1"/>
</dbReference>
<keyword id="KW-0378">Hydrolase</keyword>
<keyword id="KW-0460">Magnesium</keyword>
<keyword id="KW-0479">Metal-binding</keyword>
<keyword id="KW-1185">Reference proteome</keyword>
<reference key="1">
    <citation type="submission" date="2005-11" db="EMBL/GenBank/DDBJ databases">
        <authorList>
            <consortium name="NIH - Mammalian Gene Collection (MGC) project"/>
        </authorList>
    </citation>
    <scope>NUCLEOTIDE SEQUENCE [LARGE SCALE MRNA]</scope>
    <source>
        <strain>Crossbred X Angus</strain>
        <tissue>Liver</tissue>
    </source>
</reference>
<gene>
    <name type="primary">NUDT22</name>
</gene>
<proteinExistence type="evidence at transcript level"/>
<accession>Q2TBI8</accession>
<organism>
    <name type="scientific">Bos taurus</name>
    <name type="common">Bovine</name>
    <dbReference type="NCBI Taxonomy" id="9913"/>
    <lineage>
        <taxon>Eukaryota</taxon>
        <taxon>Metazoa</taxon>
        <taxon>Chordata</taxon>
        <taxon>Craniata</taxon>
        <taxon>Vertebrata</taxon>
        <taxon>Euteleostomi</taxon>
        <taxon>Mammalia</taxon>
        <taxon>Eutheria</taxon>
        <taxon>Laurasiatheria</taxon>
        <taxon>Artiodactyla</taxon>
        <taxon>Ruminantia</taxon>
        <taxon>Pecora</taxon>
        <taxon>Bovidae</taxon>
        <taxon>Bovinae</taxon>
        <taxon>Bos</taxon>
    </lineage>
</organism>
<comment type="function">
    <text evidence="1">Hydrolyzes UDP-glucose to glucose 1-phosphate and UMP and UDP-galactose to galactose 1-phosphate and UMP. Preferred substrate is UDP-glucose.</text>
</comment>
<comment type="catalytic activity">
    <reaction evidence="1">
        <text>UDP-sugar + H2O = UMP + alpha-D-aldose 1-phosphate.</text>
        <dbReference type="EC" id="3.6.1.45"/>
    </reaction>
</comment>
<comment type="cofactor">
    <cofactor evidence="1">
        <name>Mg(2+)</name>
        <dbReference type="ChEBI" id="CHEBI:18420"/>
    </cofactor>
</comment>
<comment type="similarity">
    <text evidence="3">Belongs to the Nudix family.</text>
</comment>
<sequence length="290" mass="31419">MDPEVSLLLQCPPGGLPEKQVRAELSPAYDRRPLPGGDKAIIAIWESRLQAQPWLFNAPKFRLHSATLAPTGLPGPQLLLRLGLTSYQDFLGTNWASSAAWLRQQGATDWGDKQAYLADPLGVGAALATADDFLVFLRRSGQVAEAPGLVDVPGGHPEPQALCPGDSPLHKDLPGELVVHELFSSVLQEICDEVNVPPLTLSQPLLLGIACNETSAGRASAEFYVQCSLTSEQVRRHYMSGGPEAHESTGIIFVEKQSMQRLQETEMWPELCPSAKGAIFLYNRVQGSST</sequence>
<feature type="chain" id="PRO_0000263730" description="Uridine diphosphate glucose pyrophosphatase NUDT22">
    <location>
        <begin position="1"/>
        <end position="290"/>
    </location>
</feature>
<feature type="domain" description="Nudix hydrolase" evidence="2">
    <location>
        <begin position="118"/>
        <end position="285"/>
    </location>
</feature>
<feature type="short sequence motif" description="Nudix box" evidence="1">
    <location>
        <begin position="175"/>
        <end position="196"/>
    </location>
</feature>
<feature type="binding site" evidence="1">
    <location>
        <position position="56"/>
    </location>
    <ligand>
        <name>substrate</name>
    </ligand>
</feature>
<feature type="binding site" evidence="1">
    <location>
        <position position="87"/>
    </location>
    <ligand>
        <name>substrate</name>
    </ligand>
</feature>
<feature type="binding site" evidence="1">
    <location>
        <position position="139"/>
    </location>
    <ligand>
        <name>substrate</name>
    </ligand>
</feature>
<feature type="binding site" evidence="1">
    <location>
        <position position="144"/>
    </location>
    <ligand>
        <name>substrate</name>
    </ligand>
</feature>
<feature type="binding site" evidence="1">
    <location>
        <position position="151"/>
    </location>
    <ligand>
        <name>substrate</name>
    </ligand>
</feature>
<feature type="binding site" evidence="1">
    <location>
        <position position="156"/>
    </location>
    <ligand>
        <name>substrate</name>
    </ligand>
</feature>
<feature type="binding site" evidence="1">
    <location>
        <position position="158"/>
    </location>
    <ligand>
        <name>substrate</name>
    </ligand>
</feature>
<feature type="binding site" evidence="1">
    <location>
        <position position="189"/>
    </location>
    <ligand>
        <name>Mg(2+)</name>
        <dbReference type="ChEBI" id="CHEBI:18420"/>
    </ligand>
</feature>
<feature type="binding site" evidence="1">
    <location>
        <position position="193"/>
    </location>
    <ligand>
        <name>Mg(2+)</name>
        <dbReference type="ChEBI" id="CHEBI:18420"/>
    </ligand>
</feature>
<feature type="binding site" evidence="1">
    <location>
        <position position="274"/>
    </location>
    <ligand>
        <name>substrate</name>
    </ligand>
</feature>